<accession>Q3SYR5</accession>
<organism>
    <name type="scientific">Bos taurus</name>
    <name type="common">Bovine</name>
    <dbReference type="NCBI Taxonomy" id="9913"/>
    <lineage>
        <taxon>Eukaryota</taxon>
        <taxon>Metazoa</taxon>
        <taxon>Chordata</taxon>
        <taxon>Craniata</taxon>
        <taxon>Vertebrata</taxon>
        <taxon>Euteleostomi</taxon>
        <taxon>Mammalia</taxon>
        <taxon>Eutheria</taxon>
        <taxon>Laurasiatheria</taxon>
        <taxon>Artiodactyla</taxon>
        <taxon>Ruminantia</taxon>
        <taxon>Pecora</taxon>
        <taxon>Bovidae</taxon>
        <taxon>Bovinae</taxon>
        <taxon>Bos</taxon>
    </lineage>
</organism>
<gene>
    <name type="primary">APOC4</name>
</gene>
<name>APOC4_BOVIN</name>
<protein>
    <recommendedName>
        <fullName>Apolipoprotein C-IV</fullName>
        <shortName>Apo-CIV</shortName>
        <shortName>ApoC-IV</shortName>
    </recommendedName>
    <alternativeName>
        <fullName>Apolipoprotein C4</fullName>
    </alternativeName>
</protein>
<reference key="1">
    <citation type="submission" date="2005-08" db="EMBL/GenBank/DDBJ databases">
        <authorList>
            <consortium name="NIH - Mammalian Gene Collection (MGC) project"/>
        </authorList>
    </citation>
    <scope>NUCLEOTIDE SEQUENCE [LARGE SCALE MRNA]</scope>
    <source>
        <strain>Hereford</strain>
        <tissue>Testis</tissue>
    </source>
</reference>
<sequence>MSFPGCRPQALASLCFCVLVLACVVACQQEEPEGTLSPQPAPARSSWSLVPGKVKEWVEPLVNRTREKWKWFWGPTAFRGFMETYYDDHLKDLGSRARAWLRSSKDNLLNKAHSLCPQLLCRPSDQN</sequence>
<keyword id="KW-0325">Glycoprotein</keyword>
<keyword id="KW-0445">Lipid transport</keyword>
<keyword id="KW-1185">Reference proteome</keyword>
<keyword id="KW-0964">Secreted</keyword>
<keyword id="KW-0732">Signal</keyword>
<keyword id="KW-0813">Transport</keyword>
<proteinExistence type="evidence at transcript level"/>
<dbReference type="EMBL" id="BC103430">
    <property type="protein sequence ID" value="AAI03431.1"/>
    <property type="molecule type" value="mRNA"/>
</dbReference>
<dbReference type="RefSeq" id="NP_001029979.1">
    <property type="nucleotide sequence ID" value="NM_001034807.1"/>
</dbReference>
<dbReference type="FunCoup" id="Q3SYR5">
    <property type="interactions" value="37"/>
</dbReference>
<dbReference type="STRING" id="9913.ENSBTAP00000027391"/>
<dbReference type="GlyCosmos" id="Q3SYR5">
    <property type="glycosylation" value="1 site, No reported glycans"/>
</dbReference>
<dbReference type="GlyGen" id="Q3SYR5">
    <property type="glycosylation" value="1 site"/>
</dbReference>
<dbReference type="PaxDb" id="9913-ENSBTAP00000027391"/>
<dbReference type="Ensembl" id="ENSBTAT00000027391.3">
    <property type="protein sequence ID" value="ENSBTAP00000027391.2"/>
    <property type="gene ID" value="ENSBTAG00000020556.3"/>
</dbReference>
<dbReference type="GeneID" id="618041"/>
<dbReference type="KEGG" id="bta:618041"/>
<dbReference type="CTD" id="346"/>
<dbReference type="VEuPathDB" id="HostDB:ENSBTAG00000020556"/>
<dbReference type="VGNC" id="VGNC:52177">
    <property type="gene designation" value="APOC4"/>
</dbReference>
<dbReference type="eggNOG" id="ENOG502TE52">
    <property type="taxonomic scope" value="Eukaryota"/>
</dbReference>
<dbReference type="GeneTree" id="ENSGT00390000015914"/>
<dbReference type="HOGENOM" id="CLU_161459_0_0_1"/>
<dbReference type="InParanoid" id="Q3SYR5"/>
<dbReference type="OMA" id="KWQWFWG"/>
<dbReference type="OrthoDB" id="9449255at2759"/>
<dbReference type="TreeFam" id="TF336879"/>
<dbReference type="Proteomes" id="UP000009136">
    <property type="component" value="Chromosome 18"/>
</dbReference>
<dbReference type="Bgee" id="ENSBTAG00000020556">
    <property type="expression patterns" value="Expressed in liver and 30 other cell types or tissues"/>
</dbReference>
<dbReference type="GO" id="GO:0034364">
    <property type="term" value="C:high-density lipoprotein particle"/>
    <property type="evidence" value="ECO:0000318"/>
    <property type="project" value="GO_Central"/>
</dbReference>
<dbReference type="GO" id="GO:0034361">
    <property type="term" value="C:very-low-density lipoprotein particle"/>
    <property type="evidence" value="ECO:0000318"/>
    <property type="project" value="GO_Central"/>
</dbReference>
<dbReference type="GO" id="GO:0019915">
    <property type="term" value="P:lipid storage"/>
    <property type="evidence" value="ECO:0007669"/>
    <property type="project" value="Ensembl"/>
</dbReference>
<dbReference type="GO" id="GO:0006869">
    <property type="term" value="P:lipid transport"/>
    <property type="evidence" value="ECO:0007669"/>
    <property type="project" value="UniProtKB-KW"/>
</dbReference>
<dbReference type="GO" id="GO:0010890">
    <property type="term" value="P:positive regulation of triglyceride storage"/>
    <property type="evidence" value="ECO:0000318"/>
    <property type="project" value="GO_Central"/>
</dbReference>
<dbReference type="GO" id="GO:0070328">
    <property type="term" value="P:triglyceride homeostasis"/>
    <property type="evidence" value="ECO:0000318"/>
    <property type="project" value="GO_Central"/>
</dbReference>
<dbReference type="InterPro" id="IPR028120">
    <property type="entry name" value="APOC4"/>
</dbReference>
<dbReference type="PANTHER" id="PTHR32288">
    <property type="entry name" value="APOLIPOPROTEIN C-IV"/>
    <property type="match status" value="1"/>
</dbReference>
<dbReference type="PANTHER" id="PTHR32288:SF0">
    <property type="entry name" value="APOLIPOPROTEIN C-IV"/>
    <property type="match status" value="1"/>
</dbReference>
<dbReference type="Pfam" id="PF15119">
    <property type="entry name" value="APOC4"/>
    <property type="match status" value="1"/>
</dbReference>
<feature type="signal peptide" evidence="2">
    <location>
        <begin position="1"/>
        <end position="27"/>
    </location>
</feature>
<feature type="chain" id="PRO_0000042968" description="Apolipoprotein C-IV">
    <location>
        <begin position="28"/>
        <end position="127"/>
    </location>
</feature>
<feature type="glycosylation site" description="N-linked (GlcNAc...) asparagine" evidence="3">
    <location>
        <position position="63"/>
    </location>
</feature>
<comment type="function">
    <text evidence="1">May participate in lipoprotein metabolism.</text>
</comment>
<comment type="subcellular location">
    <subcellularLocation>
        <location evidence="1">Secreted</location>
    </subcellularLocation>
</comment>
<comment type="tissue specificity">
    <text>Expressed by the liver and secreted in plasma.</text>
</comment>
<comment type="similarity">
    <text evidence="4">Belongs to the apolipoprotein C4 family.</text>
</comment>
<evidence type="ECO:0000250" key="1"/>
<evidence type="ECO:0000250" key="2">
    <source>
        <dbReference type="UniProtKB" id="P55057"/>
    </source>
</evidence>
<evidence type="ECO:0000255" key="3"/>
<evidence type="ECO:0000305" key="4"/>